<feature type="initiator methionine" description="Removed" evidence="2">
    <location>
        <position position="1"/>
    </location>
</feature>
<feature type="chain" id="PRO_0000094050" description="Flotillin-2">
    <location>
        <begin position="2"/>
        <end position="428"/>
    </location>
</feature>
<feature type="modified residue" description="Phosphoserine" evidence="2">
    <location>
        <position position="405"/>
    </location>
</feature>
<feature type="lipid moiety-binding region" description="N-myristoyl glycine" evidence="2">
    <location>
        <position position="2"/>
    </location>
</feature>
<feature type="lipid moiety-binding region" description="S-palmitoyl cysteine; by ZDHHC5" evidence="1">
    <location>
        <position position="4"/>
    </location>
</feature>
<feature type="lipid moiety-binding region" description="S-palmitoyl cysteine" evidence="1">
    <location>
        <position position="19"/>
    </location>
</feature>
<feature type="lipid moiety-binding region" description="S-palmitoyl cysteine; by ZDHHC5" evidence="1">
    <location>
        <position position="20"/>
    </location>
</feature>
<feature type="splice variant" id="VSP_037692" description="In isoform 3." evidence="5 6">
    <location>
        <begin position="1"/>
        <end position="49"/>
    </location>
</feature>
<feature type="splice variant" id="VSP_000502" description="In isoform 2." evidence="7">
    <original>MTLQPRCEDVETAEGVALT</original>
    <variation>MTILCRCENIETSEGVPLF</variation>
    <location>
        <begin position="50"/>
        <end position="68"/>
    </location>
</feature>
<feature type="sequence conflict" description="In Ref. 4; AAH70423." evidence="7" ref="4">
    <original>A</original>
    <variation>S</variation>
    <location>
        <position position="87"/>
    </location>
</feature>
<feature type="strand" evidence="8">
    <location>
        <begin position="50"/>
        <end position="52"/>
    </location>
</feature>
<feature type="strand" evidence="8">
    <location>
        <begin position="56"/>
        <end position="60"/>
    </location>
</feature>
<feature type="strand" evidence="8">
    <location>
        <begin position="62"/>
        <end position="64"/>
    </location>
</feature>
<feature type="strand" evidence="8">
    <location>
        <begin position="66"/>
        <end position="69"/>
    </location>
</feature>
<feature type="strand" evidence="8">
    <location>
        <begin position="72"/>
        <end position="77"/>
    </location>
</feature>
<feature type="helix" evidence="8">
    <location>
        <begin position="85"/>
        <end position="91"/>
    </location>
</feature>
<feature type="strand" evidence="8">
    <location>
        <begin position="92"/>
        <end position="94"/>
    </location>
</feature>
<feature type="helix" evidence="8">
    <location>
        <begin position="96"/>
        <end position="117"/>
    </location>
</feature>
<feature type="helix" evidence="8">
    <location>
        <begin position="120"/>
        <end position="125"/>
    </location>
</feature>
<feature type="helix" evidence="8">
    <location>
        <begin position="127"/>
        <end position="142"/>
    </location>
</feature>
<feature type="turn" evidence="8">
    <location>
        <begin position="143"/>
        <end position="146"/>
    </location>
</feature>
<feature type="strand" evidence="8">
    <location>
        <begin position="147"/>
        <end position="153"/>
    </location>
</feature>
<feature type="helix" evidence="8">
    <location>
        <begin position="163"/>
        <end position="167"/>
    </location>
</feature>
<evidence type="ECO:0000250" key="1"/>
<evidence type="ECO:0000250" key="2">
    <source>
        <dbReference type="UniProtKB" id="Q14254"/>
    </source>
</evidence>
<evidence type="ECO:0000269" key="3">
    <source>
    </source>
</evidence>
<evidence type="ECO:0000269" key="4">
    <source>
    </source>
</evidence>
<evidence type="ECO:0000303" key="5">
    <source>
    </source>
</evidence>
<evidence type="ECO:0000303" key="6">
    <source>
    </source>
</evidence>
<evidence type="ECO:0000305" key="7"/>
<evidence type="ECO:0007829" key="8">
    <source>
        <dbReference type="PDB" id="1WIN"/>
    </source>
</evidence>
<name>FLOT2_MOUSE</name>
<keyword id="KW-0002">3D-structure</keyword>
<keyword id="KW-0025">Alternative splicing</keyword>
<keyword id="KW-0130">Cell adhesion</keyword>
<keyword id="KW-1003">Cell membrane</keyword>
<keyword id="KW-0903">Direct protein sequencing</keyword>
<keyword id="KW-0967">Endosome</keyword>
<keyword id="KW-0449">Lipoprotein</keyword>
<keyword id="KW-0472">Membrane</keyword>
<keyword id="KW-0519">Myristate</keyword>
<keyword id="KW-0564">Palmitate</keyword>
<keyword id="KW-0597">Phosphoprotein</keyword>
<keyword id="KW-1185">Reference proteome</keyword>
<sequence length="428" mass="47038">MGNCHTVGPNEALVVSGGCCGSDYKQYVFGGWAWAWWCISDTQRISLEIMTLQPRCEDVETAEGVALTVTGVAQVKIMTEKELLAVACEQFLGKNVQDIKNVVLQTLEGHLRSILGTLTVEQIYQDRDQFAKLVREVAAPDVGRMGIEILSFTIKDVYDKVDYLSSLGKTQTAVVQRDADIGVAEAERDAGIREAECKKEMLDVKFMADTKIADSKRAFELQKSAFSEEVNIKTAEAQLAYELQGAREQQKIRQEEIEIEVVQRKKQIAVEAQEILRTDKELIATVRRPAEAEAHRIQQIAEGEKVKQVLLAQAEAEKIRKIGEAEAAVIEAMGKAEAERMKLKAEAYQKYGDAAKMALVLEALPQIAAKISAPLTKVDEIVVLSGDNSKVTSEVNRLLAELPASVHALTGVDLSKIPLIKNATGAQV</sequence>
<accession>Q60634</accession>
<accession>Q5SS82</accession>
<accession>Q6NS75</accession>
<proteinExistence type="evidence at protein level"/>
<organism>
    <name type="scientific">Mus musculus</name>
    <name type="common">Mouse</name>
    <dbReference type="NCBI Taxonomy" id="10090"/>
    <lineage>
        <taxon>Eukaryota</taxon>
        <taxon>Metazoa</taxon>
        <taxon>Chordata</taxon>
        <taxon>Craniata</taxon>
        <taxon>Vertebrata</taxon>
        <taxon>Euteleostomi</taxon>
        <taxon>Mammalia</taxon>
        <taxon>Eutheria</taxon>
        <taxon>Euarchontoglires</taxon>
        <taxon>Glires</taxon>
        <taxon>Rodentia</taxon>
        <taxon>Myomorpha</taxon>
        <taxon>Muroidea</taxon>
        <taxon>Muridae</taxon>
        <taxon>Murinae</taxon>
        <taxon>Mus</taxon>
        <taxon>Mus</taxon>
    </lineage>
</organism>
<reference key="1">
    <citation type="journal article" date="1995" name="Genomics">
        <title>Epidermal surface antigen (MS17S1) is highly conserved between mouse and human.</title>
        <authorList>
            <person name="Cho Y.-J."/>
            <person name="Chema D."/>
            <person name="Moskow J.J."/>
            <person name="Cho M."/>
            <person name="Schroeder W.T."/>
            <person name="Overbeek P."/>
            <person name="Buchberg A.M."/>
            <person name="Duvic M."/>
        </authorList>
    </citation>
    <scope>NUCLEOTIDE SEQUENCE [MRNA] (ISOFORM 3)</scope>
    <scope>ALTERNATIVE SPLICING</scope>
    <source>
        <strain>C57BL/6J</strain>
        <tissue>Epidermis</tissue>
        <tissue>Skin</tissue>
    </source>
</reference>
<reference key="2">
    <citation type="journal article" date="2005" name="Science">
        <title>The transcriptional landscape of the mammalian genome.</title>
        <authorList>
            <person name="Carninci P."/>
            <person name="Kasukawa T."/>
            <person name="Katayama S."/>
            <person name="Gough J."/>
            <person name="Frith M.C."/>
            <person name="Maeda N."/>
            <person name="Oyama R."/>
            <person name="Ravasi T."/>
            <person name="Lenhard B."/>
            <person name="Wells C."/>
            <person name="Kodzius R."/>
            <person name="Shimokawa K."/>
            <person name="Bajic V.B."/>
            <person name="Brenner S.E."/>
            <person name="Batalov S."/>
            <person name="Forrest A.R."/>
            <person name="Zavolan M."/>
            <person name="Davis M.J."/>
            <person name="Wilming L.G."/>
            <person name="Aidinis V."/>
            <person name="Allen J.E."/>
            <person name="Ambesi-Impiombato A."/>
            <person name="Apweiler R."/>
            <person name="Aturaliya R.N."/>
            <person name="Bailey T.L."/>
            <person name="Bansal M."/>
            <person name="Baxter L."/>
            <person name="Beisel K.W."/>
            <person name="Bersano T."/>
            <person name="Bono H."/>
            <person name="Chalk A.M."/>
            <person name="Chiu K.P."/>
            <person name="Choudhary V."/>
            <person name="Christoffels A."/>
            <person name="Clutterbuck D.R."/>
            <person name="Crowe M.L."/>
            <person name="Dalla E."/>
            <person name="Dalrymple B.P."/>
            <person name="de Bono B."/>
            <person name="Della Gatta G."/>
            <person name="di Bernardo D."/>
            <person name="Down T."/>
            <person name="Engstrom P."/>
            <person name="Fagiolini M."/>
            <person name="Faulkner G."/>
            <person name="Fletcher C.F."/>
            <person name="Fukushima T."/>
            <person name="Furuno M."/>
            <person name="Futaki S."/>
            <person name="Gariboldi M."/>
            <person name="Georgii-Hemming P."/>
            <person name="Gingeras T.R."/>
            <person name="Gojobori T."/>
            <person name="Green R.E."/>
            <person name="Gustincich S."/>
            <person name="Harbers M."/>
            <person name="Hayashi Y."/>
            <person name="Hensch T.K."/>
            <person name="Hirokawa N."/>
            <person name="Hill D."/>
            <person name="Huminiecki L."/>
            <person name="Iacono M."/>
            <person name="Ikeo K."/>
            <person name="Iwama A."/>
            <person name="Ishikawa T."/>
            <person name="Jakt M."/>
            <person name="Kanapin A."/>
            <person name="Katoh M."/>
            <person name="Kawasawa Y."/>
            <person name="Kelso J."/>
            <person name="Kitamura H."/>
            <person name="Kitano H."/>
            <person name="Kollias G."/>
            <person name="Krishnan S.P."/>
            <person name="Kruger A."/>
            <person name="Kummerfeld S.K."/>
            <person name="Kurochkin I.V."/>
            <person name="Lareau L.F."/>
            <person name="Lazarevic D."/>
            <person name="Lipovich L."/>
            <person name="Liu J."/>
            <person name="Liuni S."/>
            <person name="McWilliam S."/>
            <person name="Madan Babu M."/>
            <person name="Madera M."/>
            <person name="Marchionni L."/>
            <person name="Matsuda H."/>
            <person name="Matsuzawa S."/>
            <person name="Miki H."/>
            <person name="Mignone F."/>
            <person name="Miyake S."/>
            <person name="Morris K."/>
            <person name="Mottagui-Tabar S."/>
            <person name="Mulder N."/>
            <person name="Nakano N."/>
            <person name="Nakauchi H."/>
            <person name="Ng P."/>
            <person name="Nilsson R."/>
            <person name="Nishiguchi S."/>
            <person name="Nishikawa S."/>
            <person name="Nori F."/>
            <person name="Ohara O."/>
            <person name="Okazaki Y."/>
            <person name="Orlando V."/>
            <person name="Pang K.C."/>
            <person name="Pavan W.J."/>
            <person name="Pavesi G."/>
            <person name="Pesole G."/>
            <person name="Petrovsky N."/>
            <person name="Piazza S."/>
            <person name="Reed J."/>
            <person name="Reid J.F."/>
            <person name="Ring B.Z."/>
            <person name="Ringwald M."/>
            <person name="Rost B."/>
            <person name="Ruan Y."/>
            <person name="Salzberg S.L."/>
            <person name="Sandelin A."/>
            <person name="Schneider C."/>
            <person name="Schoenbach C."/>
            <person name="Sekiguchi K."/>
            <person name="Semple C.A."/>
            <person name="Seno S."/>
            <person name="Sessa L."/>
            <person name="Sheng Y."/>
            <person name="Shibata Y."/>
            <person name="Shimada H."/>
            <person name="Shimada K."/>
            <person name="Silva D."/>
            <person name="Sinclair B."/>
            <person name="Sperling S."/>
            <person name="Stupka E."/>
            <person name="Sugiura K."/>
            <person name="Sultana R."/>
            <person name="Takenaka Y."/>
            <person name="Taki K."/>
            <person name="Tammoja K."/>
            <person name="Tan S.L."/>
            <person name="Tang S."/>
            <person name="Taylor M.S."/>
            <person name="Tegner J."/>
            <person name="Teichmann S.A."/>
            <person name="Ueda H.R."/>
            <person name="van Nimwegen E."/>
            <person name="Verardo R."/>
            <person name="Wei C.L."/>
            <person name="Yagi K."/>
            <person name="Yamanishi H."/>
            <person name="Zabarovsky E."/>
            <person name="Zhu S."/>
            <person name="Zimmer A."/>
            <person name="Hide W."/>
            <person name="Bult C."/>
            <person name="Grimmond S.M."/>
            <person name="Teasdale R.D."/>
            <person name="Liu E.T."/>
            <person name="Brusic V."/>
            <person name="Quackenbush J."/>
            <person name="Wahlestedt C."/>
            <person name="Mattick J.S."/>
            <person name="Hume D.A."/>
            <person name="Kai C."/>
            <person name="Sasaki D."/>
            <person name="Tomaru Y."/>
            <person name="Fukuda S."/>
            <person name="Kanamori-Katayama M."/>
            <person name="Suzuki M."/>
            <person name="Aoki J."/>
            <person name="Arakawa T."/>
            <person name="Iida J."/>
            <person name="Imamura K."/>
            <person name="Itoh M."/>
            <person name="Kato T."/>
            <person name="Kawaji H."/>
            <person name="Kawagashira N."/>
            <person name="Kawashima T."/>
            <person name="Kojima M."/>
            <person name="Kondo S."/>
            <person name="Konno H."/>
            <person name="Nakano K."/>
            <person name="Ninomiya N."/>
            <person name="Nishio T."/>
            <person name="Okada M."/>
            <person name="Plessy C."/>
            <person name="Shibata K."/>
            <person name="Shiraki T."/>
            <person name="Suzuki S."/>
            <person name="Tagami M."/>
            <person name="Waki K."/>
            <person name="Watahiki A."/>
            <person name="Okamura-Oho Y."/>
            <person name="Suzuki H."/>
            <person name="Kawai J."/>
            <person name="Hayashizaki Y."/>
        </authorList>
    </citation>
    <scope>NUCLEOTIDE SEQUENCE [LARGE SCALE MRNA] (ISOFORM 1)</scope>
</reference>
<reference key="3">
    <citation type="journal article" date="2009" name="PLoS Biol.">
        <title>Lineage-specific biology revealed by a finished genome assembly of the mouse.</title>
        <authorList>
            <person name="Church D.M."/>
            <person name="Goodstadt L."/>
            <person name="Hillier L.W."/>
            <person name="Zody M.C."/>
            <person name="Goldstein S."/>
            <person name="She X."/>
            <person name="Bult C.J."/>
            <person name="Agarwala R."/>
            <person name="Cherry J.L."/>
            <person name="DiCuccio M."/>
            <person name="Hlavina W."/>
            <person name="Kapustin Y."/>
            <person name="Meric P."/>
            <person name="Maglott D."/>
            <person name="Birtle Z."/>
            <person name="Marques A.C."/>
            <person name="Graves T."/>
            <person name="Zhou S."/>
            <person name="Teague B."/>
            <person name="Potamousis K."/>
            <person name="Churas C."/>
            <person name="Place M."/>
            <person name="Herschleb J."/>
            <person name="Runnheim R."/>
            <person name="Forrest D."/>
            <person name="Amos-Landgraf J."/>
            <person name="Schwartz D.C."/>
            <person name="Cheng Z."/>
            <person name="Lindblad-Toh K."/>
            <person name="Eichler E.E."/>
            <person name="Ponting C.P."/>
        </authorList>
    </citation>
    <scope>NUCLEOTIDE SEQUENCE [LARGE SCALE GENOMIC DNA]</scope>
    <source>
        <strain>C57BL/6J</strain>
    </source>
</reference>
<reference key="4">
    <citation type="journal article" date="2004" name="Genome Res.">
        <title>The status, quality, and expansion of the NIH full-length cDNA project: the Mammalian Gene Collection (MGC).</title>
        <authorList>
            <consortium name="The MGC Project Team"/>
        </authorList>
    </citation>
    <scope>NUCLEOTIDE SEQUENCE [LARGE SCALE MRNA] (ISOFORM 3)</scope>
    <source>
        <strain>C57BL/6J</strain>
        <tissue>Brain</tissue>
    </source>
</reference>
<reference key="5">
    <citation type="journal article" date="1997" name="J. Biol. Chem.">
        <title>Flotillin and epidermal surface antigen define a new family of caveolae-associated integral membrane proteins.</title>
        <authorList>
            <person name="Bickel P.E."/>
            <person name="Scherer P.E."/>
            <person name="Schnitzer J.E."/>
            <person name="Oh P."/>
            <person name="Lisanti M.P."/>
            <person name="Lodish H.F."/>
        </authorList>
    </citation>
    <scope>PROTEIN SEQUENCE OF 223-231 AND 233-251</scope>
    <scope>SUBCELLULAR LOCATION</scope>
    <source>
        <tissue>Lung</tissue>
    </source>
</reference>
<reference key="6">
    <citation type="journal article" date="1999" name="J. Biol. Chem.">
        <title>Flotillins/cavatellins are differentially expressed in cells and tissues and form a hetero-oligomeric complex with caveolins in vivo. Characterization and epitope-mapping of a novel flotillin-1 monoclonal antibody probe.</title>
        <authorList>
            <person name="Volonte D."/>
            <person name="Galbiati F."/>
            <person name="Li S."/>
            <person name="Nishiyama K."/>
            <person name="Okamoto T."/>
            <person name="Lisanti M.P."/>
        </authorList>
    </citation>
    <scope>SUBUNIT</scope>
</reference>
<reference key="7">
    <citation type="journal article" date="2010" name="Cell">
        <title>A tissue-specific atlas of mouse protein phosphorylation and expression.</title>
        <authorList>
            <person name="Huttlin E.L."/>
            <person name="Jedrychowski M.P."/>
            <person name="Elias J.E."/>
            <person name="Goswami T."/>
            <person name="Rad R."/>
            <person name="Beausoleil S.A."/>
            <person name="Villen J."/>
            <person name="Haas W."/>
            <person name="Sowa M.E."/>
            <person name="Gygi S.P."/>
        </authorList>
    </citation>
    <scope>IDENTIFICATION BY MASS SPECTROMETRY [LARGE SCALE ANALYSIS]</scope>
    <source>
        <tissue>Brain</tissue>
        <tissue>Brown adipose tissue</tissue>
        <tissue>Heart</tissue>
        <tissue>Lung</tissue>
        <tissue>Spleen</tissue>
    </source>
</reference>
<reference key="8">
    <citation type="journal article" date="2012" name="J. Biol. Chem.">
        <title>DHHC5 protein palmitoylates flotillin-2 and is rapidly degraded on induction of neuronal differentiation in cultured cells.</title>
        <authorList>
            <person name="Li Y."/>
            <person name="Martin B.R."/>
            <person name="Cravatt B.F."/>
            <person name="Hofmann S.L."/>
        </authorList>
    </citation>
    <scope>PALMITOYLATION BY ZDHHC5</scope>
</reference>
<reference key="9">
    <citation type="submission" date="2004-11" db="PDB data bank">
        <title>Solution structure of the band 7 domain of the mouse flotillin 2 protein.</title>
        <authorList>
            <consortium name="RIKEN structural genomics initiative (RSGI)"/>
        </authorList>
    </citation>
    <scope>STRUCTURE BY NMR OF 43-172</scope>
</reference>
<gene>
    <name type="primary">Flot2</name>
    <name type="synonym">Esa1</name>
    <name type="synonym">M17s1</name>
</gene>
<dbReference type="EMBL" id="U07890">
    <property type="protein sequence ID" value="AAA93127.1"/>
    <property type="molecule type" value="mRNA"/>
</dbReference>
<dbReference type="EMBL" id="AK170557">
    <property type="protein sequence ID" value="BAE41879.1"/>
    <property type="molecule type" value="mRNA"/>
</dbReference>
<dbReference type="EMBL" id="AL669840">
    <property type="status" value="NOT_ANNOTATED_CDS"/>
    <property type="molecule type" value="Genomic_DNA"/>
</dbReference>
<dbReference type="EMBL" id="CH466596">
    <property type="protein sequence ID" value="EDL12906.1"/>
    <property type="molecule type" value="Genomic_DNA"/>
</dbReference>
<dbReference type="EMBL" id="BC070423">
    <property type="protein sequence ID" value="AAH70423.1"/>
    <property type="molecule type" value="mRNA"/>
</dbReference>
<dbReference type="CCDS" id="CCDS25088.1">
    <molecule id="Q60634-3"/>
</dbReference>
<dbReference type="CCDS" id="CCDS36237.1">
    <molecule id="Q60634-1"/>
</dbReference>
<dbReference type="RefSeq" id="NP_001035493.1">
    <molecule id="Q60634-1"/>
    <property type="nucleotide sequence ID" value="NM_001040403.2"/>
</dbReference>
<dbReference type="RefSeq" id="NP_001271156.1">
    <property type="nucleotide sequence ID" value="NM_001284227.1"/>
</dbReference>
<dbReference type="RefSeq" id="NP_001271157.1">
    <molecule id="Q60634-3"/>
    <property type="nucleotide sequence ID" value="NM_001284228.3"/>
</dbReference>
<dbReference type="RefSeq" id="NP_001349555.1">
    <molecule id="Q60634-3"/>
    <property type="nucleotide sequence ID" value="NM_001362626.1"/>
</dbReference>
<dbReference type="RefSeq" id="NP_001418002.1">
    <molecule id="Q60634-3"/>
    <property type="nucleotide sequence ID" value="NM_001431073.1"/>
</dbReference>
<dbReference type="RefSeq" id="NP_032054.1">
    <molecule id="Q60634-3"/>
    <property type="nucleotide sequence ID" value="NM_008028.4"/>
</dbReference>
<dbReference type="RefSeq" id="XP_006532255.1">
    <property type="nucleotide sequence ID" value="XM_006532192.2"/>
</dbReference>
<dbReference type="RefSeq" id="XP_006532256.1">
    <property type="nucleotide sequence ID" value="XM_006532193.3"/>
</dbReference>
<dbReference type="PDB" id="1WIN">
    <property type="method" value="NMR"/>
    <property type="chains" value="A=43-172"/>
</dbReference>
<dbReference type="PDBsum" id="1WIN"/>
<dbReference type="BMRB" id="Q60634"/>
<dbReference type="SMR" id="Q60634"/>
<dbReference type="BioGRID" id="199705">
    <property type="interactions" value="61"/>
</dbReference>
<dbReference type="FunCoup" id="Q60634">
    <property type="interactions" value="784"/>
</dbReference>
<dbReference type="IntAct" id="Q60634">
    <property type="interactions" value="62"/>
</dbReference>
<dbReference type="MINT" id="Q60634"/>
<dbReference type="STRING" id="10090.ENSMUSP00000072136"/>
<dbReference type="GlyGen" id="Q60634">
    <property type="glycosylation" value="1 site, 1 O-linked glycan (1 site)"/>
</dbReference>
<dbReference type="iPTMnet" id="Q60634"/>
<dbReference type="PhosphoSitePlus" id="Q60634"/>
<dbReference type="SwissPalm" id="Q60634"/>
<dbReference type="jPOST" id="Q60634"/>
<dbReference type="PaxDb" id="10090-ENSMUSP00000072136"/>
<dbReference type="PeptideAtlas" id="Q60634"/>
<dbReference type="ProteomicsDB" id="271772">
    <molecule id="Q60634-1"/>
</dbReference>
<dbReference type="ProteomicsDB" id="271773">
    <molecule id="Q60634-2"/>
</dbReference>
<dbReference type="ProteomicsDB" id="271774">
    <molecule id="Q60634-3"/>
</dbReference>
<dbReference type="Pumba" id="Q60634"/>
<dbReference type="Antibodypedia" id="666">
    <property type="antibodies" value="332 antibodies from 38 providers"/>
</dbReference>
<dbReference type="DNASU" id="14252"/>
<dbReference type="Ensembl" id="ENSMUST00000072289.12">
    <molecule id="Q60634-1"/>
    <property type="protein sequence ID" value="ENSMUSP00000072136.6"/>
    <property type="gene ID" value="ENSMUSG00000061981.15"/>
</dbReference>
<dbReference type="Ensembl" id="ENSMUST00000100784.9">
    <molecule id="Q60634-3"/>
    <property type="protein sequence ID" value="ENSMUSP00000098347.3"/>
    <property type="gene ID" value="ENSMUSG00000061981.15"/>
</dbReference>
<dbReference type="GeneID" id="14252"/>
<dbReference type="KEGG" id="mmu:14252"/>
<dbReference type="UCSC" id="uc007khw.1">
    <molecule id="Q60634-1"/>
    <property type="organism name" value="mouse"/>
</dbReference>
<dbReference type="AGR" id="MGI:103309"/>
<dbReference type="CTD" id="2319"/>
<dbReference type="MGI" id="MGI:103309">
    <property type="gene designation" value="Flot2"/>
</dbReference>
<dbReference type="VEuPathDB" id="HostDB:ENSMUSG00000061981"/>
<dbReference type="eggNOG" id="KOG2668">
    <property type="taxonomic scope" value="Eukaryota"/>
</dbReference>
<dbReference type="GeneTree" id="ENSGT00560000077232"/>
<dbReference type="HOGENOM" id="CLU_038134_1_0_1"/>
<dbReference type="InParanoid" id="Q60634"/>
<dbReference type="OMA" id="MWRVAEP"/>
<dbReference type="OrthoDB" id="6080404at2759"/>
<dbReference type="PhylomeDB" id="Q60634"/>
<dbReference type="TreeFam" id="TF324879"/>
<dbReference type="Reactome" id="R-MMU-5213460">
    <property type="pathway name" value="RIPK1-mediated regulated necrosis"/>
</dbReference>
<dbReference type="Reactome" id="R-MMU-5675482">
    <property type="pathway name" value="Regulation of necroptotic cell death"/>
</dbReference>
<dbReference type="Reactome" id="R-MMU-8849932">
    <property type="pathway name" value="Synaptic adhesion-like molecules"/>
</dbReference>
<dbReference type="Reactome" id="R-MMU-8980692">
    <property type="pathway name" value="RHOA GTPase cycle"/>
</dbReference>
<dbReference type="Reactome" id="R-MMU-9013026">
    <property type="pathway name" value="RHOB GTPase cycle"/>
</dbReference>
<dbReference type="Reactome" id="R-MMU-9013106">
    <property type="pathway name" value="RHOC GTPase cycle"/>
</dbReference>
<dbReference type="Reactome" id="R-MMU-9696264">
    <property type="pathway name" value="RND3 GTPase cycle"/>
</dbReference>
<dbReference type="Reactome" id="R-MMU-9696273">
    <property type="pathway name" value="RND1 GTPase cycle"/>
</dbReference>
<dbReference type="BioGRID-ORCS" id="14252">
    <property type="hits" value="2 hits in 78 CRISPR screens"/>
</dbReference>
<dbReference type="CD-CODE" id="CE726F99">
    <property type="entry name" value="Postsynaptic density"/>
</dbReference>
<dbReference type="ChiTaRS" id="Flot2">
    <property type="organism name" value="mouse"/>
</dbReference>
<dbReference type="EvolutionaryTrace" id="Q60634"/>
<dbReference type="PRO" id="PR:Q60634"/>
<dbReference type="Proteomes" id="UP000000589">
    <property type="component" value="Chromosome 11"/>
</dbReference>
<dbReference type="RNAct" id="Q60634">
    <property type="molecule type" value="protein"/>
</dbReference>
<dbReference type="Bgee" id="ENSMUSG00000061981">
    <property type="expression patterns" value="Expressed in ankle joint and 253 other cell types or tissues"/>
</dbReference>
<dbReference type="ExpressionAtlas" id="Q60634">
    <property type="expression patterns" value="baseline and differential"/>
</dbReference>
<dbReference type="GO" id="GO:0002080">
    <property type="term" value="C:acrosomal membrane"/>
    <property type="evidence" value="ECO:0000314"/>
    <property type="project" value="MGI"/>
</dbReference>
<dbReference type="GO" id="GO:0005912">
    <property type="term" value="C:adherens junction"/>
    <property type="evidence" value="ECO:0007669"/>
    <property type="project" value="Ensembl"/>
</dbReference>
<dbReference type="GO" id="GO:0016323">
    <property type="term" value="C:basolateral plasma membrane"/>
    <property type="evidence" value="ECO:0007669"/>
    <property type="project" value="Ensembl"/>
</dbReference>
<dbReference type="GO" id="GO:0005901">
    <property type="term" value="C:caveola"/>
    <property type="evidence" value="ECO:0000314"/>
    <property type="project" value="MGI"/>
</dbReference>
<dbReference type="GO" id="GO:0044291">
    <property type="term" value="C:cell-cell contact zone"/>
    <property type="evidence" value="ECO:0007669"/>
    <property type="project" value="Ensembl"/>
</dbReference>
<dbReference type="GO" id="GO:0030864">
    <property type="term" value="C:cortical actin cytoskeleton"/>
    <property type="evidence" value="ECO:0007669"/>
    <property type="project" value="Ensembl"/>
</dbReference>
<dbReference type="GO" id="GO:0031410">
    <property type="term" value="C:cytoplasmic vesicle"/>
    <property type="evidence" value="ECO:0000314"/>
    <property type="project" value="UniProtKB"/>
</dbReference>
<dbReference type="GO" id="GO:0032839">
    <property type="term" value="C:dendrite cytoplasm"/>
    <property type="evidence" value="ECO:0007669"/>
    <property type="project" value="GOC"/>
</dbReference>
<dbReference type="GO" id="GO:0030139">
    <property type="term" value="C:endocytic vesicle"/>
    <property type="evidence" value="ECO:0000250"/>
    <property type="project" value="UniProtKB"/>
</dbReference>
<dbReference type="GO" id="GO:0005768">
    <property type="term" value="C:endosome"/>
    <property type="evidence" value="ECO:0000250"/>
    <property type="project" value="UniProtKB"/>
</dbReference>
<dbReference type="GO" id="GO:0016600">
    <property type="term" value="C:flotillin complex"/>
    <property type="evidence" value="ECO:0000314"/>
    <property type="project" value="UniProtKB"/>
</dbReference>
<dbReference type="GO" id="GO:0098978">
    <property type="term" value="C:glutamatergic synapse"/>
    <property type="evidence" value="ECO:0000314"/>
    <property type="project" value="SynGO"/>
</dbReference>
<dbReference type="GO" id="GO:0030027">
    <property type="term" value="C:lamellipodium"/>
    <property type="evidence" value="ECO:0007669"/>
    <property type="project" value="Ensembl"/>
</dbReference>
<dbReference type="GO" id="GO:0016020">
    <property type="term" value="C:membrane"/>
    <property type="evidence" value="ECO:0000314"/>
    <property type="project" value="MGI"/>
</dbReference>
<dbReference type="GO" id="GO:0045121">
    <property type="term" value="C:membrane raft"/>
    <property type="evidence" value="ECO:0000314"/>
    <property type="project" value="MGI"/>
</dbReference>
<dbReference type="GO" id="GO:0048471">
    <property type="term" value="C:perinuclear region of cytoplasm"/>
    <property type="evidence" value="ECO:0007669"/>
    <property type="project" value="Ensembl"/>
</dbReference>
<dbReference type="GO" id="GO:0001931">
    <property type="term" value="C:uropod"/>
    <property type="evidence" value="ECO:0007669"/>
    <property type="project" value="Ensembl"/>
</dbReference>
<dbReference type="GO" id="GO:0098937">
    <property type="term" value="P:anterograde dendritic transport"/>
    <property type="evidence" value="ECO:0000314"/>
    <property type="project" value="SynGO"/>
</dbReference>
<dbReference type="GO" id="GO:0007155">
    <property type="term" value="P:cell adhesion"/>
    <property type="evidence" value="ECO:0007669"/>
    <property type="project" value="UniProtKB-KW"/>
</dbReference>
<dbReference type="GO" id="GO:1902992">
    <property type="term" value="P:negative regulation of amyloid precursor protein catabolic process"/>
    <property type="evidence" value="ECO:0007669"/>
    <property type="project" value="Ensembl"/>
</dbReference>
<dbReference type="GO" id="GO:0010629">
    <property type="term" value="P:negative regulation of gene expression"/>
    <property type="evidence" value="ECO:0007669"/>
    <property type="project" value="Ensembl"/>
</dbReference>
<dbReference type="GO" id="GO:0043123">
    <property type="term" value="P:positive regulation of canonical NF-kappaB signal transduction"/>
    <property type="evidence" value="ECO:0007669"/>
    <property type="project" value="Ensembl"/>
</dbReference>
<dbReference type="GO" id="GO:1903905">
    <property type="term" value="P:positive regulation of establishment of T cell polarity"/>
    <property type="evidence" value="ECO:0007669"/>
    <property type="project" value="Ensembl"/>
</dbReference>
<dbReference type="GO" id="GO:0072659">
    <property type="term" value="P:protein localization to plasma membrane"/>
    <property type="evidence" value="ECO:0007669"/>
    <property type="project" value="Ensembl"/>
</dbReference>
<dbReference type="GO" id="GO:0044860">
    <property type="term" value="P:protein localization to plasma membrane raft"/>
    <property type="evidence" value="ECO:0007669"/>
    <property type="project" value="Ensembl"/>
</dbReference>
<dbReference type="GO" id="GO:0050821">
    <property type="term" value="P:protein stabilization"/>
    <property type="evidence" value="ECO:0007669"/>
    <property type="project" value="Ensembl"/>
</dbReference>
<dbReference type="GO" id="GO:0045661">
    <property type="term" value="P:regulation of myoblast differentiation"/>
    <property type="evidence" value="ECO:0000270"/>
    <property type="project" value="UniProtKB"/>
</dbReference>
<dbReference type="GO" id="GO:0099072">
    <property type="term" value="P:regulation of postsynaptic membrane neurotransmitter receptor levels"/>
    <property type="evidence" value="ECO:0000314"/>
    <property type="project" value="SynGO"/>
</dbReference>
<dbReference type="CDD" id="cd03399">
    <property type="entry name" value="SPFH_flotillin"/>
    <property type="match status" value="1"/>
</dbReference>
<dbReference type="FunFam" id="3.30.479.30:FF:000003">
    <property type="entry name" value="Flotillin 2"/>
    <property type="match status" value="1"/>
</dbReference>
<dbReference type="Gene3D" id="3.30.479.30">
    <property type="entry name" value="Band 7 domain"/>
    <property type="match status" value="1"/>
</dbReference>
<dbReference type="InterPro" id="IPR001107">
    <property type="entry name" value="Band_7"/>
</dbReference>
<dbReference type="InterPro" id="IPR036013">
    <property type="entry name" value="Band_7/SPFH_dom_sf"/>
</dbReference>
<dbReference type="InterPro" id="IPR031905">
    <property type="entry name" value="Flotillin_C"/>
</dbReference>
<dbReference type="InterPro" id="IPR027705">
    <property type="entry name" value="Flotillin_fam"/>
</dbReference>
<dbReference type="PANTHER" id="PTHR13806:SF46">
    <property type="entry name" value="FLOTILLIN-1-RELATED"/>
    <property type="match status" value="1"/>
</dbReference>
<dbReference type="PANTHER" id="PTHR13806">
    <property type="entry name" value="FLOTILLIN-RELATED"/>
    <property type="match status" value="1"/>
</dbReference>
<dbReference type="Pfam" id="PF01145">
    <property type="entry name" value="Band_7"/>
    <property type="match status" value="1"/>
</dbReference>
<dbReference type="Pfam" id="PF15975">
    <property type="entry name" value="Flot"/>
    <property type="match status" value="1"/>
</dbReference>
<dbReference type="SMART" id="SM00244">
    <property type="entry name" value="PHB"/>
    <property type="match status" value="1"/>
</dbReference>
<dbReference type="SUPFAM" id="SSF117892">
    <property type="entry name" value="Band 7/SPFH domain"/>
    <property type="match status" value="1"/>
</dbReference>
<protein>
    <recommendedName>
        <fullName>Flotillin-2</fullName>
    </recommendedName>
    <alternativeName>
        <fullName>Epidermal surface antigen</fullName>
        <shortName>ESA</shortName>
    </alternativeName>
    <alternativeName>
        <fullName>Membrane component chromosome 17 surface marker 1 homolog</fullName>
    </alternativeName>
</protein>
<comment type="function">
    <text>May act as a scaffolding protein within caveolar membranes, functionally participating in formation of caveolae or caveolae-like vesicles. May be involved in epidermal cell adhesion and epidermal structure and function.</text>
</comment>
<comment type="subunit">
    <text evidence="1">Heterooligomeric complex of flotillin-1 and flotillin-2 and caveolin-1 and caveolin-2. Interacts with ECPAS (By similarity).</text>
</comment>
<comment type="subcellular location">
    <subcellularLocation>
        <location evidence="1">Cell membrane</location>
        <topology evidence="1">Peripheral membrane protein</topology>
    </subcellularLocation>
    <subcellularLocation>
        <location evidence="1">Membrane</location>
        <location evidence="1">Caveola</location>
        <topology evidence="4">Peripheral membrane protein</topology>
    </subcellularLocation>
    <subcellularLocation>
        <location evidence="1">Endosome</location>
    </subcellularLocation>
    <subcellularLocation>
        <location evidence="2">Membrane</location>
        <topology evidence="2">Lipid-anchor</topology>
    </subcellularLocation>
    <text evidence="1">Membrane-associated protein of caveolae.</text>
</comment>
<comment type="alternative products">
    <event type="alternative splicing"/>
    <isoform>
        <id>Q60634-1</id>
        <name>1</name>
        <sequence type="displayed"/>
    </isoform>
    <isoform>
        <id>Q60634-2</id>
        <name>2</name>
        <sequence type="described" ref="VSP_000502"/>
    </isoform>
    <isoform>
        <id>Q60634-3</id>
        <name>3</name>
        <sequence type="described" ref="VSP_037692"/>
    </isoform>
</comment>
<comment type="tissue specificity">
    <text>Expressed in many tissues, including suprabasal epidermis, hair follicles, heart, lung, thymus, spleen, liver, kidney and brain. Not expressed in skeletal muscle.</text>
</comment>
<comment type="PTM">
    <text evidence="3">ZDHHC5-catalyzed palmitoylation may be required for the formation of higher-order complexes and for neurite outgrowth in cultured neural stem cells.</text>
</comment>
<comment type="similarity">
    <text evidence="7">Belongs to the band 7/mec-2 family. Flotillin subfamily.</text>
</comment>